<organism>
    <name type="scientific">Haemophilus influenzae (strain PittEE)</name>
    <dbReference type="NCBI Taxonomy" id="374930"/>
    <lineage>
        <taxon>Bacteria</taxon>
        <taxon>Pseudomonadati</taxon>
        <taxon>Pseudomonadota</taxon>
        <taxon>Gammaproteobacteria</taxon>
        <taxon>Pasteurellales</taxon>
        <taxon>Pasteurellaceae</taxon>
        <taxon>Haemophilus</taxon>
    </lineage>
</organism>
<feature type="chain" id="PRO_1000083724" description="Autonomous glycyl radical cofactor">
    <location>
        <begin position="1"/>
        <end position="127"/>
    </location>
</feature>
<feature type="domain" description="Glycine radical" evidence="1">
    <location>
        <begin position="5"/>
        <end position="127"/>
    </location>
</feature>
<feature type="modified residue" description="Glycine radical" evidence="1">
    <location>
        <position position="102"/>
    </location>
</feature>
<name>GRCA_HAEIE</name>
<protein>
    <recommendedName>
        <fullName evidence="1">Autonomous glycyl radical cofactor</fullName>
    </recommendedName>
</protein>
<keyword id="KW-0556">Organic radical</keyword>
<accession>A5UBC1</accession>
<sequence>MIKGIQITQAANDNLLNSFWLLDSEKNEVRCLCAKGEFAEDQVVAVSELGQIEYRELPVNVAPTVKVEGGQHLNVNVLRRETLEDAVNNPDKYPQLTIRVSGYAVRFNSLTPEQQRDVITRTFTESL</sequence>
<reference key="1">
    <citation type="journal article" date="2007" name="Genome Biol.">
        <title>Characterization and modeling of the Haemophilus influenzae core and supragenomes based on the complete genomic sequences of Rd and 12 clinical nontypeable strains.</title>
        <authorList>
            <person name="Hogg J.S."/>
            <person name="Hu F.Z."/>
            <person name="Janto B."/>
            <person name="Boissy R."/>
            <person name="Hayes J."/>
            <person name="Keefe R."/>
            <person name="Post J.C."/>
            <person name="Ehrlich G.D."/>
        </authorList>
    </citation>
    <scope>NUCLEOTIDE SEQUENCE [LARGE SCALE GENOMIC DNA]</scope>
    <source>
        <strain>PittEE</strain>
    </source>
</reference>
<evidence type="ECO:0000255" key="1">
    <source>
        <dbReference type="HAMAP-Rule" id="MF_00806"/>
    </source>
</evidence>
<dbReference type="EMBL" id="CP000671">
    <property type="protein sequence ID" value="ABQ98072.1"/>
    <property type="molecule type" value="Genomic_DNA"/>
</dbReference>
<dbReference type="SMR" id="A5UBC1"/>
<dbReference type="KEGG" id="hip:CGSHiEE_03225"/>
<dbReference type="HOGENOM" id="CLU_133780_0_0_6"/>
<dbReference type="GO" id="GO:0005829">
    <property type="term" value="C:cytosol"/>
    <property type="evidence" value="ECO:0007669"/>
    <property type="project" value="TreeGrafter"/>
</dbReference>
<dbReference type="GO" id="GO:0008861">
    <property type="term" value="F:formate C-acetyltransferase activity"/>
    <property type="evidence" value="ECO:0007669"/>
    <property type="project" value="TreeGrafter"/>
</dbReference>
<dbReference type="FunFam" id="3.20.70.20:FF:000002">
    <property type="entry name" value="Autonomous glycyl radical cofactor"/>
    <property type="match status" value="1"/>
</dbReference>
<dbReference type="Gene3D" id="3.20.70.20">
    <property type="match status" value="1"/>
</dbReference>
<dbReference type="HAMAP" id="MF_00806">
    <property type="entry name" value="GrcA"/>
    <property type="match status" value="1"/>
</dbReference>
<dbReference type="InterPro" id="IPR050244">
    <property type="entry name" value="Auton_GlycylRad_Cofactor"/>
</dbReference>
<dbReference type="InterPro" id="IPR019777">
    <property type="entry name" value="Form_AcTrfase_GR_CS"/>
</dbReference>
<dbReference type="InterPro" id="IPR001150">
    <property type="entry name" value="Gly_radical"/>
</dbReference>
<dbReference type="InterPro" id="IPR011140">
    <property type="entry name" value="Glycyl_radical_cofactor_GrcA"/>
</dbReference>
<dbReference type="NCBIfam" id="TIGR04365">
    <property type="entry name" value="spare_glycyl"/>
    <property type="match status" value="1"/>
</dbReference>
<dbReference type="PANTHER" id="PTHR30191">
    <property type="entry name" value="FORMATE ACETYLTRANSFERASE"/>
    <property type="match status" value="1"/>
</dbReference>
<dbReference type="PANTHER" id="PTHR30191:SF0">
    <property type="entry name" value="FORMATE ACETYLTRANSFERASE 1"/>
    <property type="match status" value="1"/>
</dbReference>
<dbReference type="Pfam" id="PF01228">
    <property type="entry name" value="Gly_radical"/>
    <property type="match status" value="1"/>
</dbReference>
<dbReference type="PIRSF" id="PIRSF000378">
    <property type="entry name" value="Gly_radicl_yfiD"/>
    <property type="match status" value="1"/>
</dbReference>
<dbReference type="SUPFAM" id="SSF51998">
    <property type="entry name" value="PFL-like glycyl radical enzymes"/>
    <property type="match status" value="1"/>
</dbReference>
<dbReference type="PROSITE" id="PS00850">
    <property type="entry name" value="GLY_RADICAL_1"/>
    <property type="match status" value="1"/>
</dbReference>
<dbReference type="PROSITE" id="PS51149">
    <property type="entry name" value="GLY_RADICAL_2"/>
    <property type="match status" value="1"/>
</dbReference>
<proteinExistence type="inferred from homology"/>
<comment type="function">
    <text evidence="1">Acts as a radical domain for damaged PFL and possibly other radical proteins.</text>
</comment>
<gene>
    <name evidence="1" type="primary">grcA</name>
    <name type="ordered locus">CGSHiEE_03225</name>
</gene>